<comment type="catalytic activity">
    <reaction evidence="1">
        <text>L-histidine = trans-urocanate + NH4(+)</text>
        <dbReference type="Rhea" id="RHEA:21232"/>
        <dbReference type="ChEBI" id="CHEBI:17771"/>
        <dbReference type="ChEBI" id="CHEBI:28938"/>
        <dbReference type="ChEBI" id="CHEBI:57595"/>
        <dbReference type="EC" id="4.3.1.3"/>
    </reaction>
</comment>
<comment type="pathway">
    <text evidence="1">Amino-acid degradation; L-histidine degradation into L-glutamate; N-formimidoyl-L-glutamate from L-histidine: step 1/3.</text>
</comment>
<comment type="subcellular location">
    <subcellularLocation>
        <location evidence="1">Cytoplasm</location>
    </subcellularLocation>
</comment>
<comment type="PTM">
    <text evidence="1">Contains an active site 4-methylidene-imidazol-5-one (MIO), which is formed autocatalytically by cyclization and dehydration of residues Ala-Ser-Gly.</text>
</comment>
<comment type="similarity">
    <text evidence="1">Belongs to the PAL/histidase family.</text>
</comment>
<evidence type="ECO:0000255" key="1">
    <source>
        <dbReference type="HAMAP-Rule" id="MF_00229"/>
    </source>
</evidence>
<name>HUTH_STAAR</name>
<gene>
    <name evidence="1" type="primary">hutH</name>
    <name type="ordered locus">SAR0008</name>
</gene>
<reference key="1">
    <citation type="journal article" date="2004" name="Proc. Natl. Acad. Sci. U.S.A.">
        <title>Complete genomes of two clinical Staphylococcus aureus strains: evidence for the rapid evolution of virulence and drug resistance.</title>
        <authorList>
            <person name="Holden M.T.G."/>
            <person name="Feil E.J."/>
            <person name="Lindsay J.A."/>
            <person name="Peacock S.J."/>
            <person name="Day N.P.J."/>
            <person name="Enright M.C."/>
            <person name="Foster T.J."/>
            <person name="Moore C.E."/>
            <person name="Hurst L."/>
            <person name="Atkin R."/>
            <person name="Barron A."/>
            <person name="Bason N."/>
            <person name="Bentley S.D."/>
            <person name="Chillingworth C."/>
            <person name="Chillingworth T."/>
            <person name="Churcher C."/>
            <person name="Clark L."/>
            <person name="Corton C."/>
            <person name="Cronin A."/>
            <person name="Doggett J."/>
            <person name="Dowd L."/>
            <person name="Feltwell T."/>
            <person name="Hance Z."/>
            <person name="Harris B."/>
            <person name="Hauser H."/>
            <person name="Holroyd S."/>
            <person name="Jagels K."/>
            <person name="James K.D."/>
            <person name="Lennard N."/>
            <person name="Line A."/>
            <person name="Mayes R."/>
            <person name="Moule S."/>
            <person name="Mungall K."/>
            <person name="Ormond D."/>
            <person name="Quail M.A."/>
            <person name="Rabbinowitsch E."/>
            <person name="Rutherford K.M."/>
            <person name="Sanders M."/>
            <person name="Sharp S."/>
            <person name="Simmonds M."/>
            <person name="Stevens K."/>
            <person name="Whitehead S."/>
            <person name="Barrell B.G."/>
            <person name="Spratt B.G."/>
            <person name="Parkhill J."/>
        </authorList>
    </citation>
    <scope>NUCLEOTIDE SEQUENCE [LARGE SCALE GENOMIC DNA]</scope>
    <source>
        <strain>MRSA252</strain>
    </source>
</reference>
<keyword id="KW-0963">Cytoplasm</keyword>
<keyword id="KW-0369">Histidine metabolism</keyword>
<keyword id="KW-0456">Lyase</keyword>
<proteinExistence type="inferred from homology"/>
<dbReference type="EC" id="4.3.1.3" evidence="1"/>
<dbReference type="EMBL" id="BX571856">
    <property type="protein sequence ID" value="CAG39036.1"/>
    <property type="molecule type" value="Genomic_DNA"/>
</dbReference>
<dbReference type="RefSeq" id="WP_000177483.1">
    <property type="nucleotide sequence ID" value="NC_002952.2"/>
</dbReference>
<dbReference type="SMR" id="Q6GKT7"/>
<dbReference type="KEGG" id="sar:SAR0008"/>
<dbReference type="HOGENOM" id="CLU_014801_4_0_9"/>
<dbReference type="UniPathway" id="UPA00379">
    <property type="reaction ID" value="UER00549"/>
</dbReference>
<dbReference type="Proteomes" id="UP000000596">
    <property type="component" value="Chromosome"/>
</dbReference>
<dbReference type="GO" id="GO:0005737">
    <property type="term" value="C:cytoplasm"/>
    <property type="evidence" value="ECO:0007669"/>
    <property type="project" value="UniProtKB-SubCell"/>
</dbReference>
<dbReference type="GO" id="GO:0004397">
    <property type="term" value="F:histidine ammonia-lyase activity"/>
    <property type="evidence" value="ECO:0007669"/>
    <property type="project" value="UniProtKB-UniRule"/>
</dbReference>
<dbReference type="GO" id="GO:0019556">
    <property type="term" value="P:L-histidine catabolic process to glutamate and formamide"/>
    <property type="evidence" value="ECO:0007669"/>
    <property type="project" value="UniProtKB-UniPathway"/>
</dbReference>
<dbReference type="GO" id="GO:0019557">
    <property type="term" value="P:L-histidine catabolic process to glutamate and formate"/>
    <property type="evidence" value="ECO:0007669"/>
    <property type="project" value="UniProtKB-UniPathway"/>
</dbReference>
<dbReference type="CDD" id="cd00332">
    <property type="entry name" value="PAL-HAL"/>
    <property type="match status" value="1"/>
</dbReference>
<dbReference type="FunFam" id="1.10.275.10:FF:000008">
    <property type="entry name" value="Histidine ammonia-lyase"/>
    <property type="match status" value="1"/>
</dbReference>
<dbReference type="FunFam" id="1.20.200.10:FF:000003">
    <property type="entry name" value="Histidine ammonia-lyase"/>
    <property type="match status" value="1"/>
</dbReference>
<dbReference type="Gene3D" id="1.20.200.10">
    <property type="entry name" value="Fumarase/aspartase (Central domain)"/>
    <property type="match status" value="1"/>
</dbReference>
<dbReference type="Gene3D" id="1.10.275.10">
    <property type="entry name" value="Fumarase/aspartase (N-terminal domain)"/>
    <property type="match status" value="1"/>
</dbReference>
<dbReference type="HAMAP" id="MF_00229">
    <property type="entry name" value="His_ammonia_lyase"/>
    <property type="match status" value="1"/>
</dbReference>
<dbReference type="InterPro" id="IPR001106">
    <property type="entry name" value="Aromatic_Lyase"/>
</dbReference>
<dbReference type="InterPro" id="IPR024083">
    <property type="entry name" value="Fumarase/histidase_N"/>
</dbReference>
<dbReference type="InterPro" id="IPR005921">
    <property type="entry name" value="HutH"/>
</dbReference>
<dbReference type="InterPro" id="IPR008948">
    <property type="entry name" value="L-Aspartase-like"/>
</dbReference>
<dbReference type="InterPro" id="IPR022313">
    <property type="entry name" value="Phe/His_NH3-lyase_AS"/>
</dbReference>
<dbReference type="NCBIfam" id="TIGR01225">
    <property type="entry name" value="hutH"/>
    <property type="match status" value="1"/>
</dbReference>
<dbReference type="NCBIfam" id="NF006871">
    <property type="entry name" value="PRK09367.1"/>
    <property type="match status" value="1"/>
</dbReference>
<dbReference type="PANTHER" id="PTHR10362">
    <property type="entry name" value="HISTIDINE AMMONIA-LYASE"/>
    <property type="match status" value="1"/>
</dbReference>
<dbReference type="Pfam" id="PF00221">
    <property type="entry name" value="Lyase_aromatic"/>
    <property type="match status" value="1"/>
</dbReference>
<dbReference type="SUPFAM" id="SSF48557">
    <property type="entry name" value="L-aspartase-like"/>
    <property type="match status" value="1"/>
</dbReference>
<dbReference type="PROSITE" id="PS00488">
    <property type="entry name" value="PAL_HISTIDASE"/>
    <property type="match status" value="1"/>
</dbReference>
<accession>Q6GKT7</accession>
<organism>
    <name type="scientific">Staphylococcus aureus (strain MRSA252)</name>
    <dbReference type="NCBI Taxonomy" id="282458"/>
    <lineage>
        <taxon>Bacteria</taxon>
        <taxon>Bacillati</taxon>
        <taxon>Bacillota</taxon>
        <taxon>Bacilli</taxon>
        <taxon>Bacillales</taxon>
        <taxon>Staphylococcaceae</taxon>
        <taxon>Staphylococcus</taxon>
    </lineage>
</organism>
<protein>
    <recommendedName>
        <fullName evidence="1">Histidine ammonia-lyase</fullName>
        <shortName evidence="1">Histidase</shortName>
        <ecNumber evidence="1">4.3.1.3</ecNumber>
    </recommendedName>
</protein>
<sequence length="504" mass="56108">MTLYLDGETLTIEYIKSFLQQQSKIEIIDDALERVKKSRAVVERIIENEETVYGITTGFGLFSDVRIDPTQYNELQMNLIRSHACGLGEPFSKEVALVMMILRLNTLLKGHSGATLELVRQLQFFINERIIPIIPQQGSLGASGDLAPLSHLALALIGEGKVLYRGEEKDSDDVLRELNRQPLNLQAKEGLALINGTQAMTAQGVISYIEAEDLGYQSEWIAALTHQSLNGIIDAYRHDVHAVRNFQEQINVAARMRDWLEGSTLTTRQAEIRVQDAYTLRCIPQIHGASFQVFNYVKQQLEFEMNAANDNPLIFEEANATFVISGGNFHGQPIAFALDHLKLGVSELANVSERRLERLVNPQLNGDLPAFLSPEPGLQSGAMIMQYAAASLVSENKTLAHPASVDSITSSANQEDHVSMGTTAARHGYQIIENARRVLAIECVIALQAAELKGVEGLSPKTRRKYDEFRSIVPSITYDRQFHKDIEAVAQYLKQSIYQTTACH</sequence>
<feature type="chain" id="PRO_0000161032" description="Histidine ammonia-lyase">
    <location>
        <begin position="1"/>
        <end position="504"/>
    </location>
</feature>
<feature type="modified residue" description="2,3-didehydroalanine (Ser)" evidence="1">
    <location>
        <position position="143"/>
    </location>
</feature>
<feature type="cross-link" description="5-imidazolinone (Ala-Gly)" evidence="1">
    <location>
        <begin position="142"/>
        <end position="144"/>
    </location>
</feature>